<dbReference type="EC" id="1.3.1.98" evidence="1"/>
<dbReference type="EMBL" id="AM263198">
    <property type="protein sequence ID" value="CAK20855.1"/>
    <property type="molecule type" value="Genomic_DNA"/>
</dbReference>
<dbReference type="RefSeq" id="WP_011702233.1">
    <property type="nucleotide sequence ID" value="NC_008555.1"/>
</dbReference>
<dbReference type="SMR" id="A0AIM3"/>
<dbReference type="STRING" id="386043.lwe1437"/>
<dbReference type="GeneID" id="61189313"/>
<dbReference type="KEGG" id="lwe:lwe1437"/>
<dbReference type="eggNOG" id="COG0812">
    <property type="taxonomic scope" value="Bacteria"/>
</dbReference>
<dbReference type="HOGENOM" id="CLU_035304_1_1_9"/>
<dbReference type="OrthoDB" id="9804753at2"/>
<dbReference type="UniPathway" id="UPA00219"/>
<dbReference type="Proteomes" id="UP000000779">
    <property type="component" value="Chromosome"/>
</dbReference>
<dbReference type="GO" id="GO:0005829">
    <property type="term" value="C:cytosol"/>
    <property type="evidence" value="ECO:0007669"/>
    <property type="project" value="TreeGrafter"/>
</dbReference>
<dbReference type="GO" id="GO:0071949">
    <property type="term" value="F:FAD binding"/>
    <property type="evidence" value="ECO:0007669"/>
    <property type="project" value="InterPro"/>
</dbReference>
<dbReference type="GO" id="GO:0008762">
    <property type="term" value="F:UDP-N-acetylmuramate dehydrogenase activity"/>
    <property type="evidence" value="ECO:0007669"/>
    <property type="project" value="UniProtKB-UniRule"/>
</dbReference>
<dbReference type="GO" id="GO:0051301">
    <property type="term" value="P:cell division"/>
    <property type="evidence" value="ECO:0007669"/>
    <property type="project" value="UniProtKB-KW"/>
</dbReference>
<dbReference type="GO" id="GO:0071555">
    <property type="term" value="P:cell wall organization"/>
    <property type="evidence" value="ECO:0007669"/>
    <property type="project" value="UniProtKB-KW"/>
</dbReference>
<dbReference type="GO" id="GO:0009252">
    <property type="term" value="P:peptidoglycan biosynthetic process"/>
    <property type="evidence" value="ECO:0007669"/>
    <property type="project" value="UniProtKB-UniRule"/>
</dbReference>
<dbReference type="GO" id="GO:0008360">
    <property type="term" value="P:regulation of cell shape"/>
    <property type="evidence" value="ECO:0007669"/>
    <property type="project" value="UniProtKB-KW"/>
</dbReference>
<dbReference type="FunFam" id="3.90.78.10:FF:000001">
    <property type="entry name" value="UDP-N-acetylenolpyruvoylglucosamine reductase"/>
    <property type="match status" value="1"/>
</dbReference>
<dbReference type="Gene3D" id="3.30.465.10">
    <property type="match status" value="1"/>
</dbReference>
<dbReference type="Gene3D" id="3.90.78.10">
    <property type="entry name" value="UDP-N-acetylenolpyruvoylglucosamine reductase, C-terminal domain"/>
    <property type="match status" value="1"/>
</dbReference>
<dbReference type="Gene3D" id="3.30.43.10">
    <property type="entry name" value="Uridine Diphospho-n-acetylenolpyruvylglucosamine Reductase, domain 2"/>
    <property type="match status" value="1"/>
</dbReference>
<dbReference type="HAMAP" id="MF_00037">
    <property type="entry name" value="MurB"/>
    <property type="match status" value="1"/>
</dbReference>
<dbReference type="InterPro" id="IPR016166">
    <property type="entry name" value="FAD-bd_PCMH"/>
</dbReference>
<dbReference type="InterPro" id="IPR036318">
    <property type="entry name" value="FAD-bd_PCMH-like_sf"/>
</dbReference>
<dbReference type="InterPro" id="IPR016167">
    <property type="entry name" value="FAD-bd_PCMH_sub1"/>
</dbReference>
<dbReference type="InterPro" id="IPR016169">
    <property type="entry name" value="FAD-bd_PCMH_sub2"/>
</dbReference>
<dbReference type="InterPro" id="IPR003170">
    <property type="entry name" value="MurB"/>
</dbReference>
<dbReference type="InterPro" id="IPR011601">
    <property type="entry name" value="MurB_C"/>
</dbReference>
<dbReference type="InterPro" id="IPR036635">
    <property type="entry name" value="MurB_C_sf"/>
</dbReference>
<dbReference type="InterPro" id="IPR006094">
    <property type="entry name" value="Oxid_FAD_bind_N"/>
</dbReference>
<dbReference type="NCBIfam" id="TIGR00179">
    <property type="entry name" value="murB"/>
    <property type="match status" value="1"/>
</dbReference>
<dbReference type="NCBIfam" id="NF010480">
    <property type="entry name" value="PRK13905.1"/>
    <property type="match status" value="1"/>
</dbReference>
<dbReference type="PANTHER" id="PTHR21071">
    <property type="entry name" value="UDP-N-ACETYLENOLPYRUVOYLGLUCOSAMINE REDUCTASE"/>
    <property type="match status" value="1"/>
</dbReference>
<dbReference type="PANTHER" id="PTHR21071:SF4">
    <property type="entry name" value="UDP-N-ACETYLENOLPYRUVOYLGLUCOSAMINE REDUCTASE"/>
    <property type="match status" value="1"/>
</dbReference>
<dbReference type="Pfam" id="PF01565">
    <property type="entry name" value="FAD_binding_4"/>
    <property type="match status" value="1"/>
</dbReference>
<dbReference type="Pfam" id="PF02873">
    <property type="entry name" value="MurB_C"/>
    <property type="match status" value="1"/>
</dbReference>
<dbReference type="SUPFAM" id="SSF56176">
    <property type="entry name" value="FAD-binding/transporter-associated domain-like"/>
    <property type="match status" value="1"/>
</dbReference>
<dbReference type="SUPFAM" id="SSF56194">
    <property type="entry name" value="Uridine diphospho-N-Acetylenolpyruvylglucosamine reductase, MurB, C-terminal domain"/>
    <property type="match status" value="1"/>
</dbReference>
<dbReference type="PROSITE" id="PS51387">
    <property type="entry name" value="FAD_PCMH"/>
    <property type="match status" value="1"/>
</dbReference>
<proteinExistence type="inferred from homology"/>
<organism>
    <name type="scientific">Listeria welshimeri serovar 6b (strain ATCC 35897 / DSM 20650 / CCUG 15529 / CIP 8149 / NCTC 11857 / SLCC 5334 / V8)</name>
    <dbReference type="NCBI Taxonomy" id="386043"/>
    <lineage>
        <taxon>Bacteria</taxon>
        <taxon>Bacillati</taxon>
        <taxon>Bacillota</taxon>
        <taxon>Bacilli</taxon>
        <taxon>Bacillales</taxon>
        <taxon>Listeriaceae</taxon>
        <taxon>Listeria</taxon>
    </lineage>
</organism>
<comment type="function">
    <text evidence="1">Cell wall formation.</text>
</comment>
<comment type="catalytic activity">
    <reaction evidence="1">
        <text>UDP-N-acetyl-alpha-D-muramate + NADP(+) = UDP-N-acetyl-3-O-(1-carboxyvinyl)-alpha-D-glucosamine + NADPH + H(+)</text>
        <dbReference type="Rhea" id="RHEA:12248"/>
        <dbReference type="ChEBI" id="CHEBI:15378"/>
        <dbReference type="ChEBI" id="CHEBI:57783"/>
        <dbReference type="ChEBI" id="CHEBI:58349"/>
        <dbReference type="ChEBI" id="CHEBI:68483"/>
        <dbReference type="ChEBI" id="CHEBI:70757"/>
        <dbReference type="EC" id="1.3.1.98"/>
    </reaction>
</comment>
<comment type="cofactor">
    <cofactor evidence="1">
        <name>FAD</name>
        <dbReference type="ChEBI" id="CHEBI:57692"/>
    </cofactor>
</comment>
<comment type="pathway">
    <text evidence="1">Cell wall biogenesis; peptidoglycan biosynthesis.</text>
</comment>
<comment type="subcellular location">
    <subcellularLocation>
        <location evidence="1">Cytoplasm</location>
    </subcellularLocation>
</comment>
<comment type="similarity">
    <text evidence="1">Belongs to the MurB family.</text>
</comment>
<evidence type="ECO:0000255" key="1">
    <source>
        <dbReference type="HAMAP-Rule" id="MF_00037"/>
    </source>
</evidence>
<sequence>MNNLQKQFPHISIKLNEPLSKYTYTKTGGNADIFVMPKSIEETQEIVSYCYQNTIPLTVLGNGSNLIIKDGGIRGVIVHLDLLQTIERKNTQIIAMSGAKLIDTAKFALGESLSGLEFACGIPGSIGGALHMNAGAYGGEISDVLEAATVLTPYGELKKLKRSELKAAYRFSTIAEKNYIVLDATFSLELEDKNIIQAKMDELTAARESKQPLEYPSCGSVFKRPPGHFAGKLIQDSGLQGHIIGGAQVSLKHAGFIVNIGNATATDYMNLIAHVQQTVREKFDVELETEVKIIGED</sequence>
<keyword id="KW-0131">Cell cycle</keyword>
<keyword id="KW-0132">Cell division</keyword>
<keyword id="KW-0133">Cell shape</keyword>
<keyword id="KW-0961">Cell wall biogenesis/degradation</keyword>
<keyword id="KW-0963">Cytoplasm</keyword>
<keyword id="KW-0274">FAD</keyword>
<keyword id="KW-0285">Flavoprotein</keyword>
<keyword id="KW-0521">NADP</keyword>
<keyword id="KW-0560">Oxidoreductase</keyword>
<keyword id="KW-0573">Peptidoglycan synthesis</keyword>
<name>MURB_LISW6</name>
<gene>
    <name evidence="1" type="primary">murB</name>
    <name type="ordered locus">lwe1437</name>
</gene>
<reference key="1">
    <citation type="journal article" date="2006" name="J. Bacteriol.">
        <title>Whole-genome sequence of Listeria welshimeri reveals common steps in genome reduction with Listeria innocua as compared to Listeria monocytogenes.</title>
        <authorList>
            <person name="Hain T."/>
            <person name="Steinweg C."/>
            <person name="Kuenne C.T."/>
            <person name="Billion A."/>
            <person name="Ghai R."/>
            <person name="Chatterjee S.S."/>
            <person name="Domann E."/>
            <person name="Kaerst U."/>
            <person name="Goesmann A."/>
            <person name="Bekel T."/>
            <person name="Bartels D."/>
            <person name="Kaiser O."/>
            <person name="Meyer F."/>
            <person name="Puehler A."/>
            <person name="Weisshaar B."/>
            <person name="Wehland J."/>
            <person name="Liang C."/>
            <person name="Dandekar T."/>
            <person name="Lampidis R."/>
            <person name="Kreft J."/>
            <person name="Goebel W."/>
            <person name="Chakraborty T."/>
        </authorList>
    </citation>
    <scope>NUCLEOTIDE SEQUENCE [LARGE SCALE GENOMIC DNA]</scope>
    <source>
        <strain>ATCC 35897 / DSM 20650 / CCUG 15529 / CIP 8149 / NCTC 11857 / SLCC 5334 / V8</strain>
    </source>
</reference>
<feature type="chain" id="PRO_1000002894" description="UDP-N-acetylenolpyruvoylglucosamine reductase">
    <location>
        <begin position="1"/>
        <end position="297"/>
    </location>
</feature>
<feature type="domain" description="FAD-binding PCMH-type" evidence="1">
    <location>
        <begin position="27"/>
        <end position="191"/>
    </location>
</feature>
<feature type="active site" evidence="1">
    <location>
        <position position="170"/>
    </location>
</feature>
<feature type="active site" description="Proton donor" evidence="1">
    <location>
        <position position="220"/>
    </location>
</feature>
<feature type="active site" evidence="1">
    <location>
        <position position="290"/>
    </location>
</feature>
<accession>A0AIM3</accession>
<protein>
    <recommendedName>
        <fullName evidence="1">UDP-N-acetylenolpyruvoylglucosamine reductase</fullName>
        <ecNumber evidence="1">1.3.1.98</ecNumber>
    </recommendedName>
    <alternativeName>
        <fullName evidence="1">UDP-N-acetylmuramate dehydrogenase</fullName>
    </alternativeName>
</protein>